<evidence type="ECO:0000255" key="1">
    <source>
        <dbReference type="HAMAP-Rule" id="MF_00625"/>
    </source>
</evidence>
<comment type="function">
    <text evidence="1">Synthesizes selenophosphate from selenide and ATP.</text>
</comment>
<comment type="catalytic activity">
    <reaction evidence="1">
        <text>hydrogenselenide + ATP + H2O = selenophosphate + AMP + phosphate + 2 H(+)</text>
        <dbReference type="Rhea" id="RHEA:18737"/>
        <dbReference type="ChEBI" id="CHEBI:15377"/>
        <dbReference type="ChEBI" id="CHEBI:15378"/>
        <dbReference type="ChEBI" id="CHEBI:16144"/>
        <dbReference type="ChEBI" id="CHEBI:29317"/>
        <dbReference type="ChEBI" id="CHEBI:30616"/>
        <dbReference type="ChEBI" id="CHEBI:43474"/>
        <dbReference type="ChEBI" id="CHEBI:456215"/>
        <dbReference type="EC" id="2.7.9.3"/>
    </reaction>
</comment>
<comment type="cofactor">
    <cofactor evidence="1">
        <name>Mg(2+)</name>
        <dbReference type="ChEBI" id="CHEBI:18420"/>
    </cofactor>
    <text evidence="1">Binds 1 Mg(2+) ion per monomer.</text>
</comment>
<comment type="subunit">
    <text evidence="1">Homodimer.</text>
</comment>
<comment type="similarity">
    <text evidence="1">Belongs to the selenophosphate synthase 1 family. Class I subfamily.</text>
</comment>
<protein>
    <recommendedName>
        <fullName evidence="1">Selenide, water dikinase</fullName>
        <ecNumber evidence="1">2.7.9.3</ecNumber>
    </recommendedName>
    <alternativeName>
        <fullName evidence="1">Selenium donor protein</fullName>
    </alternativeName>
    <alternativeName>
        <fullName evidence="1">Selenophosphate synthase</fullName>
    </alternativeName>
</protein>
<accession>A4YBB9</accession>
<organism>
    <name type="scientific">Shewanella putrefaciens (strain CN-32 / ATCC BAA-453)</name>
    <dbReference type="NCBI Taxonomy" id="319224"/>
    <lineage>
        <taxon>Bacteria</taxon>
        <taxon>Pseudomonadati</taxon>
        <taxon>Pseudomonadota</taxon>
        <taxon>Gammaproteobacteria</taxon>
        <taxon>Alteromonadales</taxon>
        <taxon>Shewanellaceae</taxon>
        <taxon>Shewanella</taxon>
    </lineage>
</organism>
<dbReference type="EC" id="2.7.9.3" evidence="1"/>
<dbReference type="EMBL" id="CP000681">
    <property type="protein sequence ID" value="ABP77252.1"/>
    <property type="molecule type" value="Genomic_DNA"/>
</dbReference>
<dbReference type="SMR" id="A4YBB9"/>
<dbReference type="STRING" id="319224.Sputcn32_3543"/>
<dbReference type="KEGG" id="spc:Sputcn32_3543"/>
<dbReference type="eggNOG" id="COG0709">
    <property type="taxonomic scope" value="Bacteria"/>
</dbReference>
<dbReference type="HOGENOM" id="CLU_032859_0_1_6"/>
<dbReference type="GO" id="GO:0005737">
    <property type="term" value="C:cytoplasm"/>
    <property type="evidence" value="ECO:0007669"/>
    <property type="project" value="TreeGrafter"/>
</dbReference>
<dbReference type="GO" id="GO:0005524">
    <property type="term" value="F:ATP binding"/>
    <property type="evidence" value="ECO:0007669"/>
    <property type="project" value="UniProtKB-UniRule"/>
</dbReference>
<dbReference type="GO" id="GO:0000287">
    <property type="term" value="F:magnesium ion binding"/>
    <property type="evidence" value="ECO:0007669"/>
    <property type="project" value="UniProtKB-UniRule"/>
</dbReference>
<dbReference type="GO" id="GO:0004756">
    <property type="term" value="F:selenide, water dikinase activity"/>
    <property type="evidence" value="ECO:0007669"/>
    <property type="project" value="UniProtKB-UniRule"/>
</dbReference>
<dbReference type="GO" id="GO:0016260">
    <property type="term" value="P:selenocysteine biosynthetic process"/>
    <property type="evidence" value="ECO:0007669"/>
    <property type="project" value="InterPro"/>
</dbReference>
<dbReference type="CDD" id="cd02195">
    <property type="entry name" value="SelD"/>
    <property type="match status" value="1"/>
</dbReference>
<dbReference type="FunFam" id="3.30.1330.10:FF:000003">
    <property type="entry name" value="Selenide, water dikinase"/>
    <property type="match status" value="1"/>
</dbReference>
<dbReference type="FunFam" id="3.90.650.10:FF:000004">
    <property type="entry name" value="Selenide, water dikinase"/>
    <property type="match status" value="1"/>
</dbReference>
<dbReference type="Gene3D" id="3.90.650.10">
    <property type="entry name" value="PurM-like C-terminal domain"/>
    <property type="match status" value="1"/>
</dbReference>
<dbReference type="Gene3D" id="3.30.1330.10">
    <property type="entry name" value="PurM-like, N-terminal domain"/>
    <property type="match status" value="1"/>
</dbReference>
<dbReference type="HAMAP" id="MF_00625">
    <property type="entry name" value="SelD"/>
    <property type="match status" value="1"/>
</dbReference>
<dbReference type="InterPro" id="IPR010918">
    <property type="entry name" value="PurM-like_C_dom"/>
</dbReference>
<dbReference type="InterPro" id="IPR036676">
    <property type="entry name" value="PurM-like_C_sf"/>
</dbReference>
<dbReference type="InterPro" id="IPR016188">
    <property type="entry name" value="PurM-like_N"/>
</dbReference>
<dbReference type="InterPro" id="IPR036921">
    <property type="entry name" value="PurM-like_N_sf"/>
</dbReference>
<dbReference type="InterPro" id="IPR023061">
    <property type="entry name" value="SelD_I"/>
</dbReference>
<dbReference type="InterPro" id="IPR004536">
    <property type="entry name" value="SPS/SelD"/>
</dbReference>
<dbReference type="NCBIfam" id="NF002098">
    <property type="entry name" value="PRK00943.1"/>
    <property type="match status" value="1"/>
</dbReference>
<dbReference type="NCBIfam" id="TIGR00476">
    <property type="entry name" value="selD"/>
    <property type="match status" value="1"/>
</dbReference>
<dbReference type="PANTHER" id="PTHR10256:SF0">
    <property type="entry name" value="INACTIVE SELENIDE, WATER DIKINASE-LIKE PROTEIN-RELATED"/>
    <property type="match status" value="1"/>
</dbReference>
<dbReference type="PANTHER" id="PTHR10256">
    <property type="entry name" value="SELENIDE, WATER DIKINASE"/>
    <property type="match status" value="1"/>
</dbReference>
<dbReference type="Pfam" id="PF00586">
    <property type="entry name" value="AIRS"/>
    <property type="match status" value="1"/>
</dbReference>
<dbReference type="Pfam" id="PF02769">
    <property type="entry name" value="AIRS_C"/>
    <property type="match status" value="1"/>
</dbReference>
<dbReference type="PIRSF" id="PIRSF036407">
    <property type="entry name" value="Selenphspht_syn"/>
    <property type="match status" value="1"/>
</dbReference>
<dbReference type="SUPFAM" id="SSF56042">
    <property type="entry name" value="PurM C-terminal domain-like"/>
    <property type="match status" value="1"/>
</dbReference>
<dbReference type="SUPFAM" id="SSF55326">
    <property type="entry name" value="PurM N-terminal domain-like"/>
    <property type="match status" value="1"/>
</dbReference>
<proteinExistence type="inferred from homology"/>
<sequence length="352" mass="36929">MSDSPVTLPESIKLTEYSHGAGCGCKISPKVLSTILASQLPVFTDPNLLVGNQSRDDAAVYKLNDEIGIISTTDFFMPIVDDPFTFGRIAATNAISDIYAMGGTPIMAIAILGWPINKLPAEIAQQVVDGGRQACMEAGIMLAGGHSIDAPEPIFGLAVTGQIALSDLKQNDTAKKGDRLYLTKPIGIGILTTAQKQKKLHDEDSLIAVNAMCQLNTIGATIAKISGVNALTDVTGFGLAGHLLEMCQGANLTAKLKFDAVPLLPRALDYLALGCVPGGTHRNYDSYGEHLPELSEHQKAILCDPQTSGGLLVAVSAAAEAELIALLDANHITPICIGSLETPTTQANVVLC</sequence>
<keyword id="KW-0067">ATP-binding</keyword>
<keyword id="KW-0418">Kinase</keyword>
<keyword id="KW-0460">Magnesium</keyword>
<keyword id="KW-0479">Metal-binding</keyword>
<keyword id="KW-0547">Nucleotide-binding</keyword>
<keyword id="KW-0711">Selenium</keyword>
<keyword id="KW-0808">Transferase</keyword>
<feature type="chain" id="PRO_1000051603" description="Selenide, water dikinase">
    <location>
        <begin position="1"/>
        <end position="352"/>
    </location>
</feature>
<feature type="active site" evidence="1">
    <location>
        <position position="23"/>
    </location>
</feature>
<feature type="binding site" description="in other chain" evidence="1">
    <location>
        <position position="26"/>
    </location>
    <ligand>
        <name>ATP</name>
        <dbReference type="ChEBI" id="CHEBI:30616"/>
        <note>ligand shared between dimeric partners</note>
    </ligand>
</feature>
<feature type="binding site" description="in other chain" evidence="1">
    <location>
        <begin position="54"/>
        <end position="56"/>
    </location>
    <ligand>
        <name>ATP</name>
        <dbReference type="ChEBI" id="CHEBI:30616"/>
        <note>ligand shared between dimeric partners</note>
    </ligand>
</feature>
<feature type="binding site" evidence="1">
    <location>
        <position position="57"/>
    </location>
    <ligand>
        <name>Mg(2+)</name>
        <dbReference type="ChEBI" id="CHEBI:18420"/>
    </ligand>
</feature>
<feature type="binding site" description="in other chain" evidence="1">
    <location>
        <position position="74"/>
    </location>
    <ligand>
        <name>ATP</name>
        <dbReference type="ChEBI" id="CHEBI:30616"/>
        <note>ligand shared between dimeric partners</note>
    </ligand>
</feature>
<feature type="binding site" description="in other chain" evidence="1">
    <location>
        <position position="97"/>
    </location>
    <ligand>
        <name>ATP</name>
        <dbReference type="ChEBI" id="CHEBI:30616"/>
        <note>ligand shared between dimeric partners</note>
    </ligand>
</feature>
<feature type="binding site" evidence="1">
    <location>
        <position position="97"/>
    </location>
    <ligand>
        <name>Mg(2+)</name>
        <dbReference type="ChEBI" id="CHEBI:18420"/>
    </ligand>
</feature>
<feature type="binding site" evidence="1">
    <location>
        <begin position="145"/>
        <end position="147"/>
    </location>
    <ligand>
        <name>ATP</name>
        <dbReference type="ChEBI" id="CHEBI:30616"/>
        <note>ligand shared between dimeric partners</note>
    </ligand>
</feature>
<feature type="binding site" evidence="1">
    <location>
        <position position="233"/>
    </location>
    <ligand>
        <name>Mg(2+)</name>
        <dbReference type="ChEBI" id="CHEBI:18420"/>
    </ligand>
</feature>
<feature type="site" description="Important for catalytic activity" evidence="1">
    <location>
        <position position="26"/>
    </location>
</feature>
<reference key="1">
    <citation type="submission" date="2007-04" db="EMBL/GenBank/DDBJ databases">
        <title>Complete sequence of Shewanella putrefaciens CN-32.</title>
        <authorList>
            <consortium name="US DOE Joint Genome Institute"/>
            <person name="Copeland A."/>
            <person name="Lucas S."/>
            <person name="Lapidus A."/>
            <person name="Barry K."/>
            <person name="Detter J.C."/>
            <person name="Glavina del Rio T."/>
            <person name="Hammon N."/>
            <person name="Israni S."/>
            <person name="Dalin E."/>
            <person name="Tice H."/>
            <person name="Pitluck S."/>
            <person name="Chain P."/>
            <person name="Malfatti S."/>
            <person name="Shin M."/>
            <person name="Vergez L."/>
            <person name="Schmutz J."/>
            <person name="Larimer F."/>
            <person name="Land M."/>
            <person name="Hauser L."/>
            <person name="Kyrpides N."/>
            <person name="Mikhailova N."/>
            <person name="Romine M.F."/>
            <person name="Fredrickson J."/>
            <person name="Tiedje J."/>
            <person name="Richardson P."/>
        </authorList>
    </citation>
    <scope>NUCLEOTIDE SEQUENCE [LARGE SCALE GENOMIC DNA]</scope>
    <source>
        <strain>CN-32 / ATCC BAA-453</strain>
    </source>
</reference>
<name>SELD_SHEPC</name>
<gene>
    <name evidence="1" type="primary">selD</name>
    <name type="ordered locus">Sputcn32_3543</name>
</gene>